<gene>
    <name evidence="2" type="primary">nuoB</name>
    <name type="ordered locus">BP0842</name>
</gene>
<accession>Q7VZQ4</accession>
<sequence>MAIDGILKQGFITTSADKFLNWAKTGSMWPMTFGLACCAVEMMHAGAARYDLDQFGIIFRPSPRQSDLMIVAGTLCNKMGPALRKVYDQMPEPRWVVSMGSCANGGGYYHYSYSVVRGCDRIVPVDVYVPGCPPTAEALVYGLLQMQNKIRLTNTIAR</sequence>
<comment type="function">
    <text evidence="1">NDH-1 shuttles electrons from NADH, via FMN and iron-sulfur (Fe-S) centers, to quinones in the respiratory chain. Couples the redox reaction to proton translocation (for every two electrons transferred, four hydrogen ions are translocated across the cytoplasmic membrane), and thus conserves the redox energy in a proton gradient (By similarity).</text>
</comment>
<comment type="catalytic activity">
    <reaction evidence="2">
        <text>a quinone + NADH + 5 H(+)(in) = a quinol + NAD(+) + 4 H(+)(out)</text>
        <dbReference type="Rhea" id="RHEA:57888"/>
        <dbReference type="ChEBI" id="CHEBI:15378"/>
        <dbReference type="ChEBI" id="CHEBI:24646"/>
        <dbReference type="ChEBI" id="CHEBI:57540"/>
        <dbReference type="ChEBI" id="CHEBI:57945"/>
        <dbReference type="ChEBI" id="CHEBI:132124"/>
    </reaction>
</comment>
<comment type="cofactor">
    <cofactor evidence="2">
        <name>[4Fe-4S] cluster</name>
        <dbReference type="ChEBI" id="CHEBI:49883"/>
    </cofactor>
    <text evidence="2">Binds 1 [4Fe-4S] cluster.</text>
</comment>
<comment type="subunit">
    <text evidence="2">NDH-1 is composed of 14 different subunits. Subunits NuoB, C, D, E, F, and G constitute the peripheral sector of the complex.</text>
</comment>
<comment type="subcellular location">
    <subcellularLocation>
        <location evidence="2">Cell inner membrane</location>
        <topology evidence="2">Peripheral membrane protein</topology>
        <orientation evidence="2">Cytoplasmic side</orientation>
    </subcellularLocation>
</comment>
<comment type="similarity">
    <text evidence="2">Belongs to the complex I 20 kDa subunit family.</text>
</comment>
<name>NUOB_BORPE</name>
<dbReference type="EC" id="7.1.1.-" evidence="2"/>
<dbReference type="EMBL" id="BX640413">
    <property type="protein sequence ID" value="CAE41145.1"/>
    <property type="molecule type" value="Genomic_DNA"/>
</dbReference>
<dbReference type="RefSeq" id="NP_879652.1">
    <property type="nucleotide sequence ID" value="NC_002929.2"/>
</dbReference>
<dbReference type="RefSeq" id="WP_003813941.1">
    <property type="nucleotide sequence ID" value="NZ_CP039022.1"/>
</dbReference>
<dbReference type="SMR" id="Q7VZQ4"/>
<dbReference type="STRING" id="257313.BP0842"/>
<dbReference type="PaxDb" id="257313-BP0842"/>
<dbReference type="KEGG" id="bpe:BP0842"/>
<dbReference type="PATRIC" id="fig|257313.5.peg.896"/>
<dbReference type="eggNOG" id="COG0377">
    <property type="taxonomic scope" value="Bacteria"/>
</dbReference>
<dbReference type="HOGENOM" id="CLU_055737_7_3_4"/>
<dbReference type="Proteomes" id="UP000002676">
    <property type="component" value="Chromosome"/>
</dbReference>
<dbReference type="GO" id="GO:0005886">
    <property type="term" value="C:plasma membrane"/>
    <property type="evidence" value="ECO:0007669"/>
    <property type="project" value="UniProtKB-SubCell"/>
</dbReference>
<dbReference type="GO" id="GO:0045271">
    <property type="term" value="C:respiratory chain complex I"/>
    <property type="evidence" value="ECO:0007669"/>
    <property type="project" value="TreeGrafter"/>
</dbReference>
<dbReference type="GO" id="GO:0051539">
    <property type="term" value="F:4 iron, 4 sulfur cluster binding"/>
    <property type="evidence" value="ECO:0007669"/>
    <property type="project" value="UniProtKB-KW"/>
</dbReference>
<dbReference type="GO" id="GO:0005506">
    <property type="term" value="F:iron ion binding"/>
    <property type="evidence" value="ECO:0007669"/>
    <property type="project" value="UniProtKB-UniRule"/>
</dbReference>
<dbReference type="GO" id="GO:0008137">
    <property type="term" value="F:NADH dehydrogenase (ubiquinone) activity"/>
    <property type="evidence" value="ECO:0007669"/>
    <property type="project" value="InterPro"/>
</dbReference>
<dbReference type="GO" id="GO:0050136">
    <property type="term" value="F:NADH:ubiquinone reductase (non-electrogenic) activity"/>
    <property type="evidence" value="ECO:0007669"/>
    <property type="project" value="UniProtKB-UniRule"/>
</dbReference>
<dbReference type="GO" id="GO:0048038">
    <property type="term" value="F:quinone binding"/>
    <property type="evidence" value="ECO:0007669"/>
    <property type="project" value="UniProtKB-KW"/>
</dbReference>
<dbReference type="GO" id="GO:0009060">
    <property type="term" value="P:aerobic respiration"/>
    <property type="evidence" value="ECO:0007669"/>
    <property type="project" value="TreeGrafter"/>
</dbReference>
<dbReference type="GO" id="GO:0015990">
    <property type="term" value="P:electron transport coupled proton transport"/>
    <property type="evidence" value="ECO:0007669"/>
    <property type="project" value="TreeGrafter"/>
</dbReference>
<dbReference type="FunFam" id="3.40.50.12280:FF:000001">
    <property type="entry name" value="NADH-quinone oxidoreductase subunit B 2"/>
    <property type="match status" value="1"/>
</dbReference>
<dbReference type="Gene3D" id="3.40.50.12280">
    <property type="match status" value="1"/>
</dbReference>
<dbReference type="HAMAP" id="MF_01356">
    <property type="entry name" value="NDH1_NuoB"/>
    <property type="match status" value="1"/>
</dbReference>
<dbReference type="InterPro" id="IPR006137">
    <property type="entry name" value="NADH_UbQ_OxRdtase-like_20kDa"/>
</dbReference>
<dbReference type="InterPro" id="IPR006138">
    <property type="entry name" value="NADH_UQ_OxRdtase_20Kd_su"/>
</dbReference>
<dbReference type="NCBIfam" id="TIGR01957">
    <property type="entry name" value="nuoB_fam"/>
    <property type="match status" value="1"/>
</dbReference>
<dbReference type="NCBIfam" id="NF005012">
    <property type="entry name" value="PRK06411.1"/>
    <property type="match status" value="1"/>
</dbReference>
<dbReference type="PANTHER" id="PTHR11995">
    <property type="entry name" value="NADH DEHYDROGENASE"/>
    <property type="match status" value="1"/>
</dbReference>
<dbReference type="PANTHER" id="PTHR11995:SF14">
    <property type="entry name" value="NADH DEHYDROGENASE [UBIQUINONE] IRON-SULFUR PROTEIN 7, MITOCHONDRIAL"/>
    <property type="match status" value="1"/>
</dbReference>
<dbReference type="Pfam" id="PF01058">
    <property type="entry name" value="Oxidored_q6"/>
    <property type="match status" value="1"/>
</dbReference>
<dbReference type="SUPFAM" id="SSF56770">
    <property type="entry name" value="HydA/Nqo6-like"/>
    <property type="match status" value="1"/>
</dbReference>
<dbReference type="PROSITE" id="PS01150">
    <property type="entry name" value="COMPLEX1_20K"/>
    <property type="match status" value="1"/>
</dbReference>
<reference key="1">
    <citation type="journal article" date="2003" name="Nat. Genet.">
        <title>Comparative analysis of the genome sequences of Bordetella pertussis, Bordetella parapertussis and Bordetella bronchiseptica.</title>
        <authorList>
            <person name="Parkhill J."/>
            <person name="Sebaihia M."/>
            <person name="Preston A."/>
            <person name="Murphy L.D."/>
            <person name="Thomson N.R."/>
            <person name="Harris D.E."/>
            <person name="Holden M.T.G."/>
            <person name="Churcher C.M."/>
            <person name="Bentley S.D."/>
            <person name="Mungall K.L."/>
            <person name="Cerdeno-Tarraga A.-M."/>
            <person name="Temple L."/>
            <person name="James K.D."/>
            <person name="Harris B."/>
            <person name="Quail M.A."/>
            <person name="Achtman M."/>
            <person name="Atkin R."/>
            <person name="Baker S."/>
            <person name="Basham D."/>
            <person name="Bason N."/>
            <person name="Cherevach I."/>
            <person name="Chillingworth T."/>
            <person name="Collins M."/>
            <person name="Cronin A."/>
            <person name="Davis P."/>
            <person name="Doggett J."/>
            <person name="Feltwell T."/>
            <person name="Goble A."/>
            <person name="Hamlin N."/>
            <person name="Hauser H."/>
            <person name="Holroyd S."/>
            <person name="Jagels K."/>
            <person name="Leather S."/>
            <person name="Moule S."/>
            <person name="Norberczak H."/>
            <person name="O'Neil S."/>
            <person name="Ormond D."/>
            <person name="Price C."/>
            <person name="Rabbinowitsch E."/>
            <person name="Rutter S."/>
            <person name="Sanders M."/>
            <person name="Saunders D."/>
            <person name="Seeger K."/>
            <person name="Sharp S."/>
            <person name="Simmonds M."/>
            <person name="Skelton J."/>
            <person name="Squares R."/>
            <person name="Squares S."/>
            <person name="Stevens K."/>
            <person name="Unwin L."/>
            <person name="Whitehead S."/>
            <person name="Barrell B.G."/>
            <person name="Maskell D.J."/>
        </authorList>
    </citation>
    <scope>NUCLEOTIDE SEQUENCE [LARGE SCALE GENOMIC DNA]</scope>
    <source>
        <strain>Tohama I / ATCC BAA-589 / NCTC 13251</strain>
    </source>
</reference>
<keyword id="KW-0004">4Fe-4S</keyword>
<keyword id="KW-0997">Cell inner membrane</keyword>
<keyword id="KW-1003">Cell membrane</keyword>
<keyword id="KW-0408">Iron</keyword>
<keyword id="KW-0411">Iron-sulfur</keyword>
<keyword id="KW-0472">Membrane</keyword>
<keyword id="KW-0479">Metal-binding</keyword>
<keyword id="KW-0520">NAD</keyword>
<keyword id="KW-0874">Quinone</keyword>
<keyword id="KW-1185">Reference proteome</keyword>
<keyword id="KW-1278">Translocase</keyword>
<keyword id="KW-0813">Transport</keyword>
<keyword id="KW-0830">Ubiquinone</keyword>
<evidence type="ECO:0000250" key="1"/>
<evidence type="ECO:0000255" key="2">
    <source>
        <dbReference type="HAMAP-Rule" id="MF_01356"/>
    </source>
</evidence>
<organism>
    <name type="scientific">Bordetella pertussis (strain Tohama I / ATCC BAA-589 / NCTC 13251)</name>
    <dbReference type="NCBI Taxonomy" id="257313"/>
    <lineage>
        <taxon>Bacteria</taxon>
        <taxon>Pseudomonadati</taxon>
        <taxon>Pseudomonadota</taxon>
        <taxon>Betaproteobacteria</taxon>
        <taxon>Burkholderiales</taxon>
        <taxon>Alcaligenaceae</taxon>
        <taxon>Bordetella</taxon>
    </lineage>
</organism>
<proteinExistence type="inferred from homology"/>
<feature type="chain" id="PRO_0000358353" description="NADH-quinone oxidoreductase subunit B">
    <location>
        <begin position="1"/>
        <end position="158"/>
    </location>
</feature>
<feature type="binding site" evidence="2">
    <location>
        <position position="37"/>
    </location>
    <ligand>
        <name>[4Fe-4S] cluster</name>
        <dbReference type="ChEBI" id="CHEBI:49883"/>
    </ligand>
</feature>
<feature type="binding site" evidence="2">
    <location>
        <position position="38"/>
    </location>
    <ligand>
        <name>[4Fe-4S] cluster</name>
        <dbReference type="ChEBI" id="CHEBI:49883"/>
    </ligand>
</feature>
<feature type="binding site" evidence="2">
    <location>
        <position position="102"/>
    </location>
    <ligand>
        <name>[4Fe-4S] cluster</name>
        <dbReference type="ChEBI" id="CHEBI:49883"/>
    </ligand>
</feature>
<feature type="binding site" evidence="2">
    <location>
        <position position="132"/>
    </location>
    <ligand>
        <name>[4Fe-4S] cluster</name>
        <dbReference type="ChEBI" id="CHEBI:49883"/>
    </ligand>
</feature>
<protein>
    <recommendedName>
        <fullName evidence="2">NADH-quinone oxidoreductase subunit B</fullName>
        <ecNumber evidence="2">7.1.1.-</ecNumber>
    </recommendedName>
    <alternativeName>
        <fullName evidence="2">NADH dehydrogenase I subunit B</fullName>
    </alternativeName>
    <alternativeName>
        <fullName evidence="2">NDH-1 subunit B</fullName>
    </alternativeName>
</protein>